<accession>Q9LYK8</accession>
<accession>Q84W70</accession>
<proteinExistence type="evidence at transcript level"/>
<dbReference type="EC" id="1.15.1.1"/>
<dbReference type="EMBL" id="AY151395">
    <property type="protein sequence ID" value="AAN46857.1"/>
    <property type="molecule type" value="mRNA"/>
</dbReference>
<dbReference type="EMBL" id="AL163763">
    <property type="protein sequence ID" value="CAB87434.1"/>
    <property type="molecule type" value="Genomic_DNA"/>
</dbReference>
<dbReference type="EMBL" id="CP002686">
    <property type="protein sequence ID" value="AEE79512.1"/>
    <property type="molecule type" value="Genomic_DNA"/>
</dbReference>
<dbReference type="EMBL" id="BT004168">
    <property type="protein sequence ID" value="AAO42188.1"/>
    <property type="molecule type" value="mRNA"/>
</dbReference>
<dbReference type="PIR" id="T47752">
    <property type="entry name" value="T47752"/>
</dbReference>
<dbReference type="RefSeq" id="NP_191194.1">
    <property type="nucleotide sequence ID" value="NM_115493.4"/>
</dbReference>
<dbReference type="SMR" id="Q9LYK8"/>
<dbReference type="BioGRID" id="10118">
    <property type="interactions" value="1"/>
</dbReference>
<dbReference type="FunCoup" id="Q9LYK8">
    <property type="interactions" value="1517"/>
</dbReference>
<dbReference type="STRING" id="3702.Q9LYK8"/>
<dbReference type="PaxDb" id="3702-AT3G56350.1"/>
<dbReference type="ProMEX" id="Q9LYK8"/>
<dbReference type="ProteomicsDB" id="232480"/>
<dbReference type="EnsemblPlants" id="AT3G56350.1">
    <property type="protein sequence ID" value="AT3G56350.1"/>
    <property type="gene ID" value="AT3G56350"/>
</dbReference>
<dbReference type="GeneID" id="824802"/>
<dbReference type="Gramene" id="AT3G56350.1">
    <property type="protein sequence ID" value="AT3G56350.1"/>
    <property type="gene ID" value="AT3G56350"/>
</dbReference>
<dbReference type="KEGG" id="ath:AT3G56350"/>
<dbReference type="Araport" id="AT3G56350"/>
<dbReference type="TAIR" id="AT3G56350"/>
<dbReference type="eggNOG" id="KOG0876">
    <property type="taxonomic scope" value="Eukaryota"/>
</dbReference>
<dbReference type="HOGENOM" id="CLU_031625_2_0_1"/>
<dbReference type="InParanoid" id="Q9LYK8"/>
<dbReference type="OMA" id="DHHGNVG"/>
<dbReference type="PhylomeDB" id="Q9LYK8"/>
<dbReference type="BioCyc" id="ARA:AT3G56350-MONOMER"/>
<dbReference type="PRO" id="PR:Q9LYK8"/>
<dbReference type="Proteomes" id="UP000006548">
    <property type="component" value="Chromosome 3"/>
</dbReference>
<dbReference type="ExpressionAtlas" id="Q9LYK8">
    <property type="expression patterns" value="baseline and differential"/>
</dbReference>
<dbReference type="GO" id="GO:0005759">
    <property type="term" value="C:mitochondrial matrix"/>
    <property type="evidence" value="ECO:0007669"/>
    <property type="project" value="UniProtKB-SubCell"/>
</dbReference>
<dbReference type="GO" id="GO:0046872">
    <property type="term" value="F:metal ion binding"/>
    <property type="evidence" value="ECO:0007669"/>
    <property type="project" value="UniProtKB-KW"/>
</dbReference>
<dbReference type="GO" id="GO:0004784">
    <property type="term" value="F:superoxide dismutase activity"/>
    <property type="evidence" value="ECO:0007669"/>
    <property type="project" value="UniProtKB-EC"/>
</dbReference>
<dbReference type="GO" id="GO:0010227">
    <property type="term" value="P:floral organ abscission"/>
    <property type="evidence" value="ECO:0000270"/>
    <property type="project" value="TAIR"/>
</dbReference>
<dbReference type="FunFam" id="1.10.287.990:FF:000001">
    <property type="entry name" value="Superoxide dismutase"/>
    <property type="match status" value="1"/>
</dbReference>
<dbReference type="FunFam" id="3.55.40.20:FF:000002">
    <property type="entry name" value="Superoxide dismutase"/>
    <property type="match status" value="1"/>
</dbReference>
<dbReference type="Gene3D" id="1.10.287.990">
    <property type="entry name" value="Fe,Mn superoxide dismutase (SOD) domain"/>
    <property type="match status" value="1"/>
</dbReference>
<dbReference type="Gene3D" id="3.55.40.20">
    <property type="entry name" value="Iron/manganese superoxide dismutase, C-terminal domain"/>
    <property type="match status" value="1"/>
</dbReference>
<dbReference type="InterPro" id="IPR050265">
    <property type="entry name" value="Fe/Mn_Superoxide_Dismutase"/>
</dbReference>
<dbReference type="InterPro" id="IPR001189">
    <property type="entry name" value="Mn/Fe_SOD"/>
</dbReference>
<dbReference type="InterPro" id="IPR019833">
    <property type="entry name" value="Mn/Fe_SOD_BS"/>
</dbReference>
<dbReference type="InterPro" id="IPR019832">
    <property type="entry name" value="Mn/Fe_SOD_C"/>
</dbReference>
<dbReference type="InterPro" id="IPR019831">
    <property type="entry name" value="Mn/Fe_SOD_N"/>
</dbReference>
<dbReference type="InterPro" id="IPR036324">
    <property type="entry name" value="Mn/Fe_SOD_N_sf"/>
</dbReference>
<dbReference type="InterPro" id="IPR036314">
    <property type="entry name" value="SOD_C_sf"/>
</dbReference>
<dbReference type="PANTHER" id="PTHR11404">
    <property type="entry name" value="SUPEROXIDE DISMUTASE 2"/>
    <property type="match status" value="1"/>
</dbReference>
<dbReference type="PANTHER" id="PTHR11404:SF43">
    <property type="entry name" value="SUPEROXIDE DISMUTASE [MN] 2, MITOCHONDRIAL"/>
    <property type="match status" value="1"/>
</dbReference>
<dbReference type="Pfam" id="PF02777">
    <property type="entry name" value="Sod_Fe_C"/>
    <property type="match status" value="1"/>
</dbReference>
<dbReference type="Pfam" id="PF00081">
    <property type="entry name" value="Sod_Fe_N"/>
    <property type="match status" value="1"/>
</dbReference>
<dbReference type="PIRSF" id="PIRSF000349">
    <property type="entry name" value="SODismutase"/>
    <property type="match status" value="1"/>
</dbReference>
<dbReference type="PRINTS" id="PR01703">
    <property type="entry name" value="MNSODISMTASE"/>
</dbReference>
<dbReference type="SUPFAM" id="SSF54719">
    <property type="entry name" value="Fe,Mn superoxide dismutase (SOD), C-terminal domain"/>
    <property type="match status" value="1"/>
</dbReference>
<dbReference type="SUPFAM" id="SSF46609">
    <property type="entry name" value="Fe,Mn superoxide dismutase (SOD), N-terminal domain"/>
    <property type="match status" value="1"/>
</dbReference>
<dbReference type="PROSITE" id="PS00088">
    <property type="entry name" value="SOD_MN"/>
    <property type="match status" value="1"/>
</dbReference>
<reference key="1">
    <citation type="submission" date="2002-09" db="EMBL/GenBank/DDBJ databases">
        <title>The character of manganese superoxide dismutases in Arabidopsis.</title>
        <authorList>
            <person name="Pan S.-M."/>
            <person name="Chung M.-H."/>
        </authorList>
    </citation>
    <scope>NUCLEOTIDE SEQUENCE [MRNA]</scope>
    <source>
        <strain>cv. Columbia</strain>
    </source>
</reference>
<reference key="2">
    <citation type="journal article" date="2000" name="Nature">
        <title>Sequence and analysis of chromosome 3 of the plant Arabidopsis thaliana.</title>
        <authorList>
            <person name="Salanoubat M."/>
            <person name="Lemcke K."/>
            <person name="Rieger M."/>
            <person name="Ansorge W."/>
            <person name="Unseld M."/>
            <person name="Fartmann B."/>
            <person name="Valle G."/>
            <person name="Bloecker H."/>
            <person name="Perez-Alonso M."/>
            <person name="Obermaier B."/>
            <person name="Delseny M."/>
            <person name="Boutry M."/>
            <person name="Grivell L.A."/>
            <person name="Mache R."/>
            <person name="Puigdomenech P."/>
            <person name="De Simone V."/>
            <person name="Choisne N."/>
            <person name="Artiguenave F."/>
            <person name="Robert C."/>
            <person name="Brottier P."/>
            <person name="Wincker P."/>
            <person name="Cattolico L."/>
            <person name="Weissenbach J."/>
            <person name="Saurin W."/>
            <person name="Quetier F."/>
            <person name="Schaefer M."/>
            <person name="Mueller-Auer S."/>
            <person name="Gabel C."/>
            <person name="Fuchs M."/>
            <person name="Benes V."/>
            <person name="Wurmbach E."/>
            <person name="Drzonek H."/>
            <person name="Erfle H."/>
            <person name="Jordan N."/>
            <person name="Bangert S."/>
            <person name="Wiedelmann R."/>
            <person name="Kranz H."/>
            <person name="Voss H."/>
            <person name="Holland R."/>
            <person name="Brandt P."/>
            <person name="Nyakatura G."/>
            <person name="Vezzi A."/>
            <person name="D'Angelo M."/>
            <person name="Pallavicini A."/>
            <person name="Toppo S."/>
            <person name="Simionati B."/>
            <person name="Conrad A."/>
            <person name="Hornischer K."/>
            <person name="Kauer G."/>
            <person name="Loehnert T.-H."/>
            <person name="Nordsiek G."/>
            <person name="Reichelt J."/>
            <person name="Scharfe M."/>
            <person name="Schoen O."/>
            <person name="Bargues M."/>
            <person name="Terol J."/>
            <person name="Climent J."/>
            <person name="Navarro P."/>
            <person name="Collado C."/>
            <person name="Perez-Perez A."/>
            <person name="Ottenwaelder B."/>
            <person name="Duchemin D."/>
            <person name="Cooke R."/>
            <person name="Laudie M."/>
            <person name="Berger-Llauro C."/>
            <person name="Purnelle B."/>
            <person name="Masuy D."/>
            <person name="de Haan M."/>
            <person name="Maarse A.C."/>
            <person name="Alcaraz J.-P."/>
            <person name="Cottet A."/>
            <person name="Casacuberta E."/>
            <person name="Monfort A."/>
            <person name="Argiriou A."/>
            <person name="Flores M."/>
            <person name="Liguori R."/>
            <person name="Vitale D."/>
            <person name="Mannhaupt G."/>
            <person name="Haase D."/>
            <person name="Schoof H."/>
            <person name="Rudd S."/>
            <person name="Zaccaria P."/>
            <person name="Mewes H.-W."/>
            <person name="Mayer K.F.X."/>
            <person name="Kaul S."/>
            <person name="Town C.D."/>
            <person name="Koo H.L."/>
            <person name="Tallon L.J."/>
            <person name="Jenkins J."/>
            <person name="Rooney T."/>
            <person name="Rizzo M."/>
            <person name="Walts A."/>
            <person name="Utterback T."/>
            <person name="Fujii C.Y."/>
            <person name="Shea T.P."/>
            <person name="Creasy T.H."/>
            <person name="Haas B."/>
            <person name="Maiti R."/>
            <person name="Wu D."/>
            <person name="Peterson J."/>
            <person name="Van Aken S."/>
            <person name="Pai G."/>
            <person name="Militscher J."/>
            <person name="Sellers P."/>
            <person name="Gill J.E."/>
            <person name="Feldblyum T.V."/>
            <person name="Preuss D."/>
            <person name="Lin X."/>
            <person name="Nierman W.C."/>
            <person name="Salzberg S.L."/>
            <person name="White O."/>
            <person name="Venter J.C."/>
            <person name="Fraser C.M."/>
            <person name="Kaneko T."/>
            <person name="Nakamura Y."/>
            <person name="Sato S."/>
            <person name="Kato T."/>
            <person name="Asamizu E."/>
            <person name="Sasamoto S."/>
            <person name="Kimura T."/>
            <person name="Idesawa K."/>
            <person name="Kawashima K."/>
            <person name="Kishida Y."/>
            <person name="Kiyokawa C."/>
            <person name="Kohara M."/>
            <person name="Matsumoto M."/>
            <person name="Matsuno A."/>
            <person name="Muraki A."/>
            <person name="Nakayama S."/>
            <person name="Nakazaki N."/>
            <person name="Shinpo S."/>
            <person name="Takeuchi C."/>
            <person name="Wada T."/>
            <person name="Watanabe A."/>
            <person name="Yamada M."/>
            <person name="Yasuda M."/>
            <person name="Tabata S."/>
        </authorList>
    </citation>
    <scope>NUCLEOTIDE SEQUENCE [LARGE SCALE GENOMIC DNA]</scope>
    <source>
        <strain>cv. Columbia</strain>
    </source>
</reference>
<reference key="3">
    <citation type="journal article" date="2017" name="Plant J.">
        <title>Araport11: a complete reannotation of the Arabidopsis thaliana reference genome.</title>
        <authorList>
            <person name="Cheng C.Y."/>
            <person name="Krishnakumar V."/>
            <person name="Chan A.P."/>
            <person name="Thibaud-Nissen F."/>
            <person name="Schobel S."/>
            <person name="Town C.D."/>
        </authorList>
    </citation>
    <scope>GENOME REANNOTATION</scope>
    <source>
        <strain>cv. Columbia</strain>
    </source>
</reference>
<reference key="4">
    <citation type="journal article" date="2003" name="Science">
        <title>Empirical analysis of transcriptional activity in the Arabidopsis genome.</title>
        <authorList>
            <person name="Yamada K."/>
            <person name="Lim J."/>
            <person name="Dale J.M."/>
            <person name="Chen H."/>
            <person name="Shinn P."/>
            <person name="Palm C.J."/>
            <person name="Southwick A.M."/>
            <person name="Wu H.C."/>
            <person name="Kim C.J."/>
            <person name="Nguyen M."/>
            <person name="Pham P.K."/>
            <person name="Cheuk R.F."/>
            <person name="Karlin-Newmann G."/>
            <person name="Liu S.X."/>
            <person name="Lam B."/>
            <person name="Sakano H."/>
            <person name="Wu T."/>
            <person name="Yu G."/>
            <person name="Miranda M."/>
            <person name="Quach H.L."/>
            <person name="Tripp M."/>
            <person name="Chang C.H."/>
            <person name="Lee J.M."/>
            <person name="Toriumi M.J."/>
            <person name="Chan M.M."/>
            <person name="Tang C.C."/>
            <person name="Onodera C.S."/>
            <person name="Deng J.M."/>
            <person name="Akiyama K."/>
            <person name="Ansari Y."/>
            <person name="Arakawa T."/>
            <person name="Banh J."/>
            <person name="Banno F."/>
            <person name="Bowser L."/>
            <person name="Brooks S.Y."/>
            <person name="Carninci P."/>
            <person name="Chao Q."/>
            <person name="Choy N."/>
            <person name="Enju A."/>
            <person name="Goldsmith A.D."/>
            <person name="Gurjal M."/>
            <person name="Hansen N.F."/>
            <person name="Hayashizaki Y."/>
            <person name="Johnson-Hopson C."/>
            <person name="Hsuan V.W."/>
            <person name="Iida K."/>
            <person name="Karnes M."/>
            <person name="Khan S."/>
            <person name="Koesema E."/>
            <person name="Ishida J."/>
            <person name="Jiang P.X."/>
            <person name="Jones T."/>
            <person name="Kawai J."/>
            <person name="Kamiya A."/>
            <person name="Meyers C."/>
            <person name="Nakajima M."/>
            <person name="Narusaka M."/>
            <person name="Seki M."/>
            <person name="Sakurai T."/>
            <person name="Satou M."/>
            <person name="Tamse R."/>
            <person name="Vaysberg M."/>
            <person name="Wallender E.K."/>
            <person name="Wong C."/>
            <person name="Yamamura Y."/>
            <person name="Yuan S."/>
            <person name="Shinozaki K."/>
            <person name="Davis R.W."/>
            <person name="Theologis A."/>
            <person name="Ecker J.R."/>
        </authorList>
    </citation>
    <scope>NUCLEOTIDE SEQUENCE [LARGE SCALE MRNA] OF 8-241</scope>
    <source>
        <strain>cv. Columbia</strain>
    </source>
</reference>
<reference key="5">
    <citation type="journal article" date="1998" name="Plant Physiol.">
        <title>Superoxide dismutase in Arabidopsis: an eclectic enzyme family with disparate regulation and protein localization.</title>
        <authorList>
            <person name="Kliebenstein D.J."/>
            <person name="Monde R.A."/>
            <person name="Last R.L."/>
        </authorList>
    </citation>
    <scope>GENE FAMILY</scope>
</reference>
<name>SODM2_ARATH</name>
<sequence length="241" mass="26892">MTTTVIIIIFVAIFATTLHDARGATMEPCLESMKTASLPDLPYAYDALEPAISEEIMRLHHQKHHQTYVTQYNKALNSLRSAMADGDHSSVVKLQSLIKFNGGGHVNHAIFWKNLAPVHEGGGKPPHDPLASAIDAHFGSLEGLIQKMNAEGAAVQGSGWVWFGLDRELKRLVVETTANQDPLVTKGSHLVPLIGIDVWEHAYYPQYKNARAEYLKNIWTVINWKYAADVFEKHTRDLDIN</sequence>
<keyword id="KW-0464">Manganese</keyword>
<keyword id="KW-0479">Metal-binding</keyword>
<keyword id="KW-0496">Mitochondrion</keyword>
<keyword id="KW-0560">Oxidoreductase</keyword>
<keyword id="KW-1185">Reference proteome</keyword>
<keyword id="KW-0809">Transit peptide</keyword>
<comment type="function">
    <text evidence="1">Destroys superoxide anion radicals which are normally produced within the cells and which are toxic to biological systems.</text>
</comment>
<comment type="catalytic activity">
    <reaction>
        <text>2 superoxide + 2 H(+) = H2O2 + O2</text>
        <dbReference type="Rhea" id="RHEA:20696"/>
        <dbReference type="ChEBI" id="CHEBI:15378"/>
        <dbReference type="ChEBI" id="CHEBI:15379"/>
        <dbReference type="ChEBI" id="CHEBI:16240"/>
        <dbReference type="ChEBI" id="CHEBI:18421"/>
        <dbReference type="EC" id="1.15.1.1"/>
    </reaction>
</comment>
<comment type="cofactor">
    <cofactor evidence="1">
        <name>Mn(2+)</name>
        <dbReference type="ChEBI" id="CHEBI:29035"/>
    </cofactor>
    <text evidence="1">Binds 1 Mn(2+) ion per subunit.</text>
</comment>
<comment type="subunit">
    <text evidence="1">Homotetramer.</text>
</comment>
<comment type="subcellular location">
    <subcellularLocation>
        <location evidence="1">Mitochondrion matrix</location>
    </subcellularLocation>
</comment>
<comment type="similarity">
    <text evidence="3">Belongs to the iron/manganese superoxide dismutase family.</text>
</comment>
<evidence type="ECO:0000250" key="1"/>
<evidence type="ECO:0000255" key="2"/>
<evidence type="ECO:0000305" key="3"/>
<protein>
    <recommendedName>
        <fullName>Superoxide dismutase [Mn] 2, mitochondrial</fullName>
        <ecNumber>1.15.1.1</ecNumber>
    </recommendedName>
    <alternativeName>
        <fullName>Protein MANGANESE SUPEROXIDE DISMUTASE 2</fullName>
        <shortName>AtMSD2</shortName>
    </alternativeName>
</protein>
<gene>
    <name type="primary">MSD2</name>
    <name type="ordered locus">At3g56350</name>
    <name type="ORF">F18O21_310</name>
</gene>
<organism>
    <name type="scientific">Arabidopsis thaliana</name>
    <name type="common">Mouse-ear cress</name>
    <dbReference type="NCBI Taxonomy" id="3702"/>
    <lineage>
        <taxon>Eukaryota</taxon>
        <taxon>Viridiplantae</taxon>
        <taxon>Streptophyta</taxon>
        <taxon>Embryophyta</taxon>
        <taxon>Tracheophyta</taxon>
        <taxon>Spermatophyta</taxon>
        <taxon>Magnoliopsida</taxon>
        <taxon>eudicotyledons</taxon>
        <taxon>Gunneridae</taxon>
        <taxon>Pentapetalae</taxon>
        <taxon>rosids</taxon>
        <taxon>malvids</taxon>
        <taxon>Brassicales</taxon>
        <taxon>Brassicaceae</taxon>
        <taxon>Camelineae</taxon>
        <taxon>Arabidopsis</taxon>
    </lineage>
</organism>
<feature type="transit peptide" description="Mitochondrion" evidence="1">
    <location>
        <begin position="1"/>
        <end status="unknown"/>
    </location>
</feature>
<feature type="chain" id="PRO_5000237373" description="Superoxide dismutase [Mn] 2, mitochondrial" evidence="2">
    <location>
        <begin status="unknown"/>
        <end position="241"/>
    </location>
</feature>
<feature type="binding site" evidence="1">
    <location>
        <position position="60"/>
    </location>
    <ligand>
        <name>Mn(2+)</name>
        <dbReference type="ChEBI" id="CHEBI:29035"/>
    </ligand>
</feature>
<feature type="binding site" evidence="1">
    <location>
        <position position="108"/>
    </location>
    <ligand>
        <name>Mn(2+)</name>
        <dbReference type="ChEBI" id="CHEBI:29035"/>
    </ligand>
</feature>
<feature type="binding site" evidence="1">
    <location>
        <position position="197"/>
    </location>
    <ligand>
        <name>Mn(2+)</name>
        <dbReference type="ChEBI" id="CHEBI:29035"/>
    </ligand>
</feature>
<feature type="binding site" evidence="1">
    <location>
        <position position="201"/>
    </location>
    <ligand>
        <name>Mn(2+)</name>
        <dbReference type="ChEBI" id="CHEBI:29035"/>
    </ligand>
</feature>